<reference key="1">
    <citation type="journal article" date="1993" name="Plant Mol. Biol.">
        <title>Organization of plastid-encoded ATPase genes and flanking regions including homologues of infB and tsf in the thermophilic red alga Galdieria sulphuraria.</title>
        <authorList>
            <person name="Kostrzewa M."/>
            <person name="Zetsche K."/>
        </authorList>
    </citation>
    <scope>NUCLEOTIDE SEQUENCE [GENOMIC DNA]</scope>
    <source>
        <strain>14-1-1 / Isolate 107.79/Goettingen</strain>
    </source>
</reference>
<keyword id="KW-0150">Chloroplast</keyword>
<keyword id="KW-0342">GTP-binding</keyword>
<keyword id="KW-0396">Initiation factor</keyword>
<keyword id="KW-0547">Nucleotide-binding</keyword>
<keyword id="KW-0934">Plastid</keyword>
<keyword id="KW-0648">Protein biosynthesis</keyword>
<name>IF2C_GALSU</name>
<dbReference type="EMBL" id="X66698">
    <property type="protein sequence ID" value="CAA47239.1"/>
    <property type="molecule type" value="Genomic_DNA"/>
</dbReference>
<dbReference type="SMR" id="Q08810"/>
<dbReference type="GO" id="GO:0009507">
    <property type="term" value="C:chloroplast"/>
    <property type="evidence" value="ECO:0007669"/>
    <property type="project" value="UniProtKB-SubCell"/>
</dbReference>
<dbReference type="GO" id="GO:0005525">
    <property type="term" value="F:GTP binding"/>
    <property type="evidence" value="ECO:0007669"/>
    <property type="project" value="UniProtKB-KW"/>
</dbReference>
<dbReference type="GO" id="GO:0003924">
    <property type="term" value="F:GTPase activity"/>
    <property type="evidence" value="ECO:0007669"/>
    <property type="project" value="InterPro"/>
</dbReference>
<dbReference type="GO" id="GO:0003743">
    <property type="term" value="F:translation initiation factor activity"/>
    <property type="evidence" value="ECO:0007669"/>
    <property type="project" value="UniProtKB-KW"/>
</dbReference>
<dbReference type="Gene3D" id="3.40.50.300">
    <property type="entry name" value="P-loop containing nucleotide triphosphate hydrolases"/>
    <property type="match status" value="1"/>
</dbReference>
<dbReference type="InterPro" id="IPR006847">
    <property type="entry name" value="IF2_N"/>
</dbReference>
<dbReference type="InterPro" id="IPR027417">
    <property type="entry name" value="P-loop_NTPase"/>
</dbReference>
<dbReference type="InterPro" id="IPR005225">
    <property type="entry name" value="Small_GTP-bd"/>
</dbReference>
<dbReference type="InterPro" id="IPR000795">
    <property type="entry name" value="T_Tr_GTP-bd_dom"/>
</dbReference>
<dbReference type="InterPro" id="IPR015760">
    <property type="entry name" value="TIF_IF2"/>
</dbReference>
<dbReference type="NCBIfam" id="TIGR00231">
    <property type="entry name" value="small_GTP"/>
    <property type="match status" value="1"/>
</dbReference>
<dbReference type="PANTHER" id="PTHR43381:SF4">
    <property type="entry name" value="EUKARYOTIC TRANSLATION INITIATION FACTOR 5B"/>
    <property type="match status" value="1"/>
</dbReference>
<dbReference type="PANTHER" id="PTHR43381">
    <property type="entry name" value="TRANSLATION INITIATION FACTOR IF-2-RELATED"/>
    <property type="match status" value="1"/>
</dbReference>
<dbReference type="Pfam" id="PF00009">
    <property type="entry name" value="GTP_EFTU"/>
    <property type="match status" value="1"/>
</dbReference>
<dbReference type="Pfam" id="PF04760">
    <property type="entry name" value="IF2_N"/>
    <property type="match status" value="1"/>
</dbReference>
<dbReference type="SUPFAM" id="SSF52540">
    <property type="entry name" value="P-loop containing nucleoside triphosphate hydrolases"/>
    <property type="match status" value="1"/>
</dbReference>
<dbReference type="PROSITE" id="PS51722">
    <property type="entry name" value="G_TR_2"/>
    <property type="match status" value="1"/>
</dbReference>
<sequence length="259" mass="29746">MNKINNNLEFNGNEDEHFIEYYNNKNYKSDLLKANKNNKTKNKKNSNFNFKSIEKNRLNYNNKKNKFILNRKAYYNSNENINCQSDIIYVEENITVNELASKIGVEATEILKVLFKKGKLLNINQILDLSLLNLISQELKINITTIDKKNNIYINTESNNDQNINDKHVKLRAPIVAVLGHVNHGKTSLIEKLIKNDLTKAETGHITQHIGAYEFIIGPKDKKIILLDTPGHEAFESIRQRVLKISDIILLIIAADEGI</sequence>
<accession>Q08810</accession>
<organism>
    <name type="scientific">Galdieria sulphuraria</name>
    <name type="common">Red alga</name>
    <dbReference type="NCBI Taxonomy" id="130081"/>
    <lineage>
        <taxon>Eukaryota</taxon>
        <taxon>Rhodophyta</taxon>
        <taxon>Bangiophyceae</taxon>
        <taxon>Galdieriales</taxon>
        <taxon>Galdieriaceae</taxon>
        <taxon>Galdieria</taxon>
    </lineage>
</organism>
<gene>
    <name type="primary">infB</name>
</gene>
<proteinExistence type="inferred from homology"/>
<evidence type="ECO:0000250" key="1"/>
<evidence type="ECO:0000255" key="2">
    <source>
        <dbReference type="PROSITE-ProRule" id="PRU01059"/>
    </source>
</evidence>
<feature type="chain" id="PRO_0000137290" description="Translation initiation factor IF-2, chloroplastic">
    <location>
        <begin position="1"/>
        <end position="259" status="greater than"/>
    </location>
</feature>
<feature type="domain" description="tr-type G" evidence="2">
    <location>
        <begin position="171"/>
        <end position="259" status="greater than"/>
    </location>
</feature>
<feature type="binding site" evidence="1">
    <location>
        <begin position="180"/>
        <end position="187"/>
    </location>
    <ligand>
        <name>GTP</name>
        <dbReference type="ChEBI" id="CHEBI:37565"/>
    </ligand>
</feature>
<feature type="non-terminal residue">
    <location>
        <position position="259"/>
    </location>
</feature>
<protein>
    <recommendedName>
        <fullName>Translation initiation factor IF-2, chloroplastic</fullName>
    </recommendedName>
</protein>
<comment type="function">
    <text evidence="1">One of the essential components for the initiation of protein synthesis. Protects formylmethionyl-tRNA from spontaneous hydrolysis and promotes its binding to the 30S ribosomal subunits. Also involved in the hydrolysis of GTP during the formation of the 70S ribosomal complex (By similarity).</text>
</comment>
<comment type="subcellular location">
    <subcellularLocation>
        <location>Plastid</location>
        <location>Chloroplast</location>
    </subcellularLocation>
</comment>
<comment type="similarity">
    <text evidence="2">Belongs to the TRAFAC class translation factor GTPase superfamily. Classic translation factor GTPase family. IF-2 subfamily.</text>
</comment>
<geneLocation type="chloroplast"/>